<dbReference type="EC" id="2.7.7.72" evidence="1"/>
<dbReference type="EMBL" id="CP001103">
    <property type="protein sequence ID" value="AEA97080.1"/>
    <property type="molecule type" value="Genomic_DNA"/>
</dbReference>
<dbReference type="RefSeq" id="WP_012517434.1">
    <property type="nucleotide sequence ID" value="NC_011138.3"/>
</dbReference>
<dbReference type="SMR" id="B4RVV4"/>
<dbReference type="KEGG" id="amc:MADE_1004670"/>
<dbReference type="HOGENOM" id="CLU_015961_1_1_6"/>
<dbReference type="Proteomes" id="UP000001870">
    <property type="component" value="Chromosome"/>
</dbReference>
<dbReference type="GO" id="GO:0005524">
    <property type="term" value="F:ATP binding"/>
    <property type="evidence" value="ECO:0007669"/>
    <property type="project" value="UniProtKB-UniRule"/>
</dbReference>
<dbReference type="GO" id="GO:0004810">
    <property type="term" value="F:CCA tRNA nucleotidyltransferase activity"/>
    <property type="evidence" value="ECO:0007669"/>
    <property type="project" value="UniProtKB-UniRule"/>
</dbReference>
<dbReference type="GO" id="GO:0000287">
    <property type="term" value="F:magnesium ion binding"/>
    <property type="evidence" value="ECO:0007669"/>
    <property type="project" value="UniProtKB-UniRule"/>
</dbReference>
<dbReference type="GO" id="GO:0000049">
    <property type="term" value="F:tRNA binding"/>
    <property type="evidence" value="ECO:0007669"/>
    <property type="project" value="UniProtKB-UniRule"/>
</dbReference>
<dbReference type="GO" id="GO:0042245">
    <property type="term" value="P:RNA repair"/>
    <property type="evidence" value="ECO:0007669"/>
    <property type="project" value="UniProtKB-KW"/>
</dbReference>
<dbReference type="GO" id="GO:0001680">
    <property type="term" value="P:tRNA 3'-terminal CCA addition"/>
    <property type="evidence" value="ECO:0007669"/>
    <property type="project" value="UniProtKB-UniRule"/>
</dbReference>
<dbReference type="CDD" id="cd05398">
    <property type="entry name" value="NT_ClassII-CCAase"/>
    <property type="match status" value="1"/>
</dbReference>
<dbReference type="Gene3D" id="3.30.460.10">
    <property type="entry name" value="Beta Polymerase, domain 2"/>
    <property type="match status" value="1"/>
</dbReference>
<dbReference type="Gene3D" id="1.10.3090.10">
    <property type="entry name" value="cca-adding enzyme, domain 2"/>
    <property type="match status" value="1"/>
</dbReference>
<dbReference type="HAMAP" id="MF_01262">
    <property type="entry name" value="CCA_bact_type2"/>
    <property type="match status" value="1"/>
</dbReference>
<dbReference type="InterPro" id="IPR012006">
    <property type="entry name" value="CCA_bact"/>
</dbReference>
<dbReference type="InterPro" id="IPR006674">
    <property type="entry name" value="HD_domain"/>
</dbReference>
<dbReference type="InterPro" id="IPR043519">
    <property type="entry name" value="NT_sf"/>
</dbReference>
<dbReference type="InterPro" id="IPR002646">
    <property type="entry name" value="PolA_pol_head_dom"/>
</dbReference>
<dbReference type="InterPro" id="IPR032828">
    <property type="entry name" value="PolyA_RNA-bd"/>
</dbReference>
<dbReference type="InterPro" id="IPR050124">
    <property type="entry name" value="tRNA_CCA-adding_enzyme"/>
</dbReference>
<dbReference type="PANTHER" id="PTHR47545">
    <property type="entry name" value="MULTIFUNCTIONAL CCA PROTEIN"/>
    <property type="match status" value="1"/>
</dbReference>
<dbReference type="PANTHER" id="PTHR47545:SF1">
    <property type="entry name" value="MULTIFUNCTIONAL CCA PROTEIN"/>
    <property type="match status" value="1"/>
</dbReference>
<dbReference type="Pfam" id="PF01743">
    <property type="entry name" value="PolyA_pol"/>
    <property type="match status" value="1"/>
</dbReference>
<dbReference type="Pfam" id="PF12627">
    <property type="entry name" value="PolyA_pol_RNAbd"/>
    <property type="match status" value="1"/>
</dbReference>
<dbReference type="PIRSF" id="PIRSF000813">
    <property type="entry name" value="CCA_bact"/>
    <property type="match status" value="1"/>
</dbReference>
<dbReference type="SUPFAM" id="SSF81301">
    <property type="entry name" value="Nucleotidyltransferase"/>
    <property type="match status" value="1"/>
</dbReference>
<dbReference type="SUPFAM" id="SSF81891">
    <property type="entry name" value="Poly A polymerase C-terminal region-like"/>
    <property type="match status" value="1"/>
</dbReference>
<dbReference type="PROSITE" id="PS51831">
    <property type="entry name" value="HD"/>
    <property type="match status" value="1"/>
</dbReference>
<feature type="chain" id="PRO_1000140065" description="CCA-adding enzyme">
    <location>
        <begin position="1"/>
        <end position="397"/>
    </location>
</feature>
<feature type="domain" description="HD" evidence="2">
    <location>
        <begin position="213"/>
        <end position="324"/>
    </location>
</feature>
<feature type="binding site" evidence="1">
    <location>
        <position position="8"/>
    </location>
    <ligand>
        <name>ATP</name>
        <dbReference type="ChEBI" id="CHEBI:30616"/>
    </ligand>
</feature>
<feature type="binding site" evidence="1">
    <location>
        <position position="8"/>
    </location>
    <ligand>
        <name>CTP</name>
        <dbReference type="ChEBI" id="CHEBI:37563"/>
    </ligand>
</feature>
<feature type="binding site" evidence="1">
    <location>
        <position position="11"/>
    </location>
    <ligand>
        <name>ATP</name>
        <dbReference type="ChEBI" id="CHEBI:30616"/>
    </ligand>
</feature>
<feature type="binding site" evidence="1">
    <location>
        <position position="11"/>
    </location>
    <ligand>
        <name>CTP</name>
        <dbReference type="ChEBI" id="CHEBI:37563"/>
    </ligand>
</feature>
<feature type="binding site" evidence="1">
    <location>
        <position position="21"/>
    </location>
    <ligand>
        <name>Mg(2+)</name>
        <dbReference type="ChEBI" id="CHEBI:18420"/>
    </ligand>
</feature>
<feature type="binding site" evidence="1">
    <location>
        <position position="23"/>
    </location>
    <ligand>
        <name>Mg(2+)</name>
        <dbReference type="ChEBI" id="CHEBI:18420"/>
    </ligand>
</feature>
<feature type="binding site" evidence="1">
    <location>
        <position position="91"/>
    </location>
    <ligand>
        <name>ATP</name>
        <dbReference type="ChEBI" id="CHEBI:30616"/>
    </ligand>
</feature>
<feature type="binding site" evidence="1">
    <location>
        <position position="91"/>
    </location>
    <ligand>
        <name>CTP</name>
        <dbReference type="ChEBI" id="CHEBI:37563"/>
    </ligand>
</feature>
<feature type="binding site" evidence="1">
    <location>
        <position position="137"/>
    </location>
    <ligand>
        <name>ATP</name>
        <dbReference type="ChEBI" id="CHEBI:30616"/>
    </ligand>
</feature>
<feature type="binding site" evidence="1">
    <location>
        <position position="137"/>
    </location>
    <ligand>
        <name>CTP</name>
        <dbReference type="ChEBI" id="CHEBI:37563"/>
    </ligand>
</feature>
<feature type="binding site" evidence="1">
    <location>
        <position position="140"/>
    </location>
    <ligand>
        <name>ATP</name>
        <dbReference type="ChEBI" id="CHEBI:30616"/>
    </ligand>
</feature>
<feature type="binding site" evidence="1">
    <location>
        <position position="140"/>
    </location>
    <ligand>
        <name>CTP</name>
        <dbReference type="ChEBI" id="CHEBI:37563"/>
    </ligand>
</feature>
<protein>
    <recommendedName>
        <fullName evidence="1">CCA-adding enzyme</fullName>
        <ecNumber evidence="1">2.7.7.72</ecNumber>
    </recommendedName>
    <alternativeName>
        <fullName evidence="1">CCA tRNA nucleotidyltransferase</fullName>
    </alternativeName>
    <alternativeName>
        <fullName evidence="1">tRNA CCA-pyrophosphorylase</fullName>
    </alternativeName>
    <alternativeName>
        <fullName evidence="1">tRNA adenylyl-/cytidylyl- transferase</fullName>
    </alternativeName>
    <alternativeName>
        <fullName evidence="1">tRNA nucleotidyltransferase</fullName>
    </alternativeName>
    <alternativeName>
        <fullName evidence="1">tRNA-NT</fullName>
    </alternativeName>
</protein>
<gene>
    <name evidence="1" type="primary">cca</name>
    <name type="ordered locus">MADE_1004670</name>
</gene>
<name>CCA_ALTMD</name>
<reference key="1">
    <citation type="journal article" date="2008" name="ISME J.">
        <title>Comparative genomics of two ecotypes of the marine planktonic copiotroph Alteromonas macleodii suggests alternative lifestyles associated with different kinds of particulate organic matter.</title>
        <authorList>
            <person name="Ivars-Martinez E."/>
            <person name="Martin-Cuadrado A.-B."/>
            <person name="D'Auria G."/>
            <person name="Mira A."/>
            <person name="Ferriera S."/>
            <person name="Johnson J."/>
            <person name="Friedman R."/>
            <person name="Rodriguez-Valera F."/>
        </authorList>
    </citation>
    <scope>NUCLEOTIDE SEQUENCE [LARGE SCALE GENOMIC DNA]</scope>
    <source>
        <strain>DSM 17117 / CIP 110805 / LMG 28347 / Deep ecotype</strain>
    </source>
</reference>
<sequence>MQVYLVGGAVRDALLNRKVIERDYVVVGATPQEMLSQGFTQVGKDFPVFLHPKTQEEYALARTERKSGKGYTGFVCDASSSVTLEEDLLRRDLTVNAIAQDNLGNLIDPYGGKKDLENHLLRHVSEAFSEDPLRVFRVARFATRYAYLGFTIANETMALMQSMAESGELSTLSAERVWQETKRSLLEKTPHVFFTVLNQAHGLNDWFAELESNLDAAIATLKTAVALENAAKENFDKSGQLENKPLETKIPESSSSGTTTLIIRFTALLAHLNEEEAKRLCNRLKVQNQLSEIVILACKFKDFLLNTQNSPADLLALFNGCDAWRRSERFTLLLKAFAPYAHYKDLDWQRQQEHIENALSAANQVNVQDIIATGVKGPAIKEALNQAKLDAIASIGE</sequence>
<keyword id="KW-0067">ATP-binding</keyword>
<keyword id="KW-0460">Magnesium</keyword>
<keyword id="KW-0479">Metal-binding</keyword>
<keyword id="KW-0547">Nucleotide-binding</keyword>
<keyword id="KW-0548">Nucleotidyltransferase</keyword>
<keyword id="KW-0692">RNA repair</keyword>
<keyword id="KW-0694">RNA-binding</keyword>
<keyword id="KW-0808">Transferase</keyword>
<keyword id="KW-0819">tRNA processing</keyword>
<comment type="function">
    <text evidence="1">Catalyzes the addition and repair of the essential 3'-terminal CCA sequence in tRNAs without using a nucleic acid template. Adds these three nucleotides in the order of C, C, and A to the tRNA nucleotide-73, using CTP and ATP as substrates and producing inorganic pyrophosphate. tRNA 3'-terminal CCA addition is required both for tRNA processing and repair. Also involved in tRNA surveillance by mediating tandem CCA addition to generate a CCACCA at the 3' terminus of unstable tRNAs. While stable tRNAs receive only 3'-terminal CCA, unstable tRNAs are marked with CCACCA and rapidly degraded.</text>
</comment>
<comment type="catalytic activity">
    <reaction evidence="1">
        <text>a tRNA precursor + 2 CTP + ATP = a tRNA with a 3' CCA end + 3 diphosphate</text>
        <dbReference type="Rhea" id="RHEA:14433"/>
        <dbReference type="Rhea" id="RHEA-COMP:10465"/>
        <dbReference type="Rhea" id="RHEA-COMP:10468"/>
        <dbReference type="ChEBI" id="CHEBI:30616"/>
        <dbReference type="ChEBI" id="CHEBI:33019"/>
        <dbReference type="ChEBI" id="CHEBI:37563"/>
        <dbReference type="ChEBI" id="CHEBI:74896"/>
        <dbReference type="ChEBI" id="CHEBI:83071"/>
        <dbReference type="EC" id="2.7.7.72"/>
    </reaction>
</comment>
<comment type="catalytic activity">
    <reaction evidence="1">
        <text>a tRNA with a 3' CCA end + 2 CTP + ATP = a tRNA with a 3' CCACCA end + 3 diphosphate</text>
        <dbReference type="Rhea" id="RHEA:76235"/>
        <dbReference type="Rhea" id="RHEA-COMP:10468"/>
        <dbReference type="Rhea" id="RHEA-COMP:18655"/>
        <dbReference type="ChEBI" id="CHEBI:30616"/>
        <dbReference type="ChEBI" id="CHEBI:33019"/>
        <dbReference type="ChEBI" id="CHEBI:37563"/>
        <dbReference type="ChEBI" id="CHEBI:83071"/>
        <dbReference type="ChEBI" id="CHEBI:195187"/>
    </reaction>
    <physiologicalReaction direction="left-to-right" evidence="1">
        <dbReference type="Rhea" id="RHEA:76236"/>
    </physiologicalReaction>
</comment>
<comment type="cofactor">
    <cofactor evidence="1">
        <name>Mg(2+)</name>
        <dbReference type="ChEBI" id="CHEBI:18420"/>
    </cofactor>
</comment>
<comment type="miscellaneous">
    <text evidence="1">A single active site specifically recognizes both ATP and CTP and is responsible for their addition.</text>
</comment>
<comment type="similarity">
    <text evidence="1">Belongs to the tRNA nucleotidyltransferase/poly(A) polymerase family. Bacterial CCA-adding enzyme type 2 subfamily.</text>
</comment>
<organism>
    <name type="scientific">Alteromonas mediterranea (strain DSM 17117 / CIP 110805 / LMG 28347 / Deep ecotype)</name>
    <dbReference type="NCBI Taxonomy" id="1774373"/>
    <lineage>
        <taxon>Bacteria</taxon>
        <taxon>Pseudomonadati</taxon>
        <taxon>Pseudomonadota</taxon>
        <taxon>Gammaproteobacteria</taxon>
        <taxon>Alteromonadales</taxon>
        <taxon>Alteromonadaceae</taxon>
        <taxon>Alteromonas/Salinimonas group</taxon>
        <taxon>Alteromonas</taxon>
    </lineage>
</organism>
<evidence type="ECO:0000255" key="1">
    <source>
        <dbReference type="HAMAP-Rule" id="MF_01262"/>
    </source>
</evidence>
<evidence type="ECO:0000255" key="2">
    <source>
        <dbReference type="PROSITE-ProRule" id="PRU01175"/>
    </source>
</evidence>
<proteinExistence type="inferred from homology"/>
<accession>B4RVV4</accession>
<accession>F2GBS9</accession>